<protein>
    <recommendedName>
        <fullName evidence="1">NADH-quinone oxidoreductase subunit K</fullName>
        <ecNumber evidence="1">7.1.1.-</ecNumber>
    </recommendedName>
    <alternativeName>
        <fullName evidence="1">NADH dehydrogenase I subunit K</fullName>
    </alternativeName>
    <alternativeName>
        <fullName evidence="1">NDH-1 subunit K</fullName>
    </alternativeName>
</protein>
<organism>
    <name type="scientific">Methylococcus capsulatus (strain ATCC 33009 / NCIMB 11132 / Bath)</name>
    <dbReference type="NCBI Taxonomy" id="243233"/>
    <lineage>
        <taxon>Bacteria</taxon>
        <taxon>Pseudomonadati</taxon>
        <taxon>Pseudomonadota</taxon>
        <taxon>Gammaproteobacteria</taxon>
        <taxon>Methylococcales</taxon>
        <taxon>Methylococcaceae</taxon>
        <taxon>Methylococcus</taxon>
    </lineage>
</organism>
<gene>
    <name evidence="1" type="primary">nuoK</name>
    <name type="ordered locus">MCA1350</name>
</gene>
<reference key="1">
    <citation type="journal article" date="2004" name="PLoS Biol.">
        <title>Genomic insights into methanotrophy: the complete genome sequence of Methylococcus capsulatus (Bath).</title>
        <authorList>
            <person name="Ward N.L."/>
            <person name="Larsen O."/>
            <person name="Sakwa J."/>
            <person name="Bruseth L."/>
            <person name="Khouri H.M."/>
            <person name="Durkin A.S."/>
            <person name="Dimitrov G."/>
            <person name="Jiang L."/>
            <person name="Scanlan D."/>
            <person name="Kang K.H."/>
            <person name="Lewis M.R."/>
            <person name="Nelson K.E."/>
            <person name="Methe B.A."/>
            <person name="Wu M."/>
            <person name="Heidelberg J.F."/>
            <person name="Paulsen I.T."/>
            <person name="Fouts D.E."/>
            <person name="Ravel J."/>
            <person name="Tettelin H."/>
            <person name="Ren Q."/>
            <person name="Read T.D."/>
            <person name="DeBoy R.T."/>
            <person name="Seshadri R."/>
            <person name="Salzberg S.L."/>
            <person name="Jensen H.B."/>
            <person name="Birkeland N.K."/>
            <person name="Nelson W.C."/>
            <person name="Dodson R.J."/>
            <person name="Grindhaug S.H."/>
            <person name="Holt I.E."/>
            <person name="Eidhammer I."/>
            <person name="Jonasen I."/>
            <person name="Vanaken S."/>
            <person name="Utterback T.R."/>
            <person name="Feldblyum T.V."/>
            <person name="Fraser C.M."/>
            <person name="Lillehaug J.R."/>
            <person name="Eisen J.A."/>
        </authorList>
    </citation>
    <scope>NUCLEOTIDE SEQUENCE [LARGE SCALE GENOMIC DNA]</scope>
    <source>
        <strain>ATCC 33009 / NCIMB 11132 / Bath</strain>
    </source>
</reference>
<comment type="function">
    <text evidence="1">NDH-1 shuttles electrons from NADH, via FMN and iron-sulfur (Fe-S) centers, to quinones in the respiratory chain. The immediate electron acceptor for the enzyme in this species is believed to be ubiquinone. Couples the redox reaction to proton translocation (for every two electrons transferred, four hydrogen ions are translocated across the cytoplasmic membrane), and thus conserves the redox energy in a proton gradient.</text>
</comment>
<comment type="catalytic activity">
    <reaction evidence="1">
        <text>a quinone + NADH + 5 H(+)(in) = a quinol + NAD(+) + 4 H(+)(out)</text>
        <dbReference type="Rhea" id="RHEA:57888"/>
        <dbReference type="ChEBI" id="CHEBI:15378"/>
        <dbReference type="ChEBI" id="CHEBI:24646"/>
        <dbReference type="ChEBI" id="CHEBI:57540"/>
        <dbReference type="ChEBI" id="CHEBI:57945"/>
        <dbReference type="ChEBI" id="CHEBI:132124"/>
    </reaction>
</comment>
<comment type="subunit">
    <text evidence="1">NDH-1 is composed of 14 different subunits. Subunits NuoA, H, J, K, L, M, N constitute the membrane sector of the complex.</text>
</comment>
<comment type="subcellular location">
    <subcellularLocation>
        <location evidence="1">Cell inner membrane</location>
        <topology evidence="1">Multi-pass membrane protein</topology>
    </subcellularLocation>
</comment>
<comment type="similarity">
    <text evidence="1">Belongs to the complex I subunit 4L family.</text>
</comment>
<sequence>MAPIPFEHALVLASVLFVLGLVALLIRRNLIVMLMSVEIMLNAAGLAFIAAGSRWGQPDGQVMFLLILTLAAAEVGVGLGLGLQVYRRHKTLDVDRLSEMQG</sequence>
<evidence type="ECO:0000255" key="1">
    <source>
        <dbReference type="HAMAP-Rule" id="MF_01456"/>
    </source>
</evidence>
<name>NUOK_METCA</name>
<feature type="chain" id="PRO_0000390121" description="NADH-quinone oxidoreductase subunit K">
    <location>
        <begin position="1"/>
        <end position="102"/>
    </location>
</feature>
<feature type="transmembrane region" description="Helical" evidence="1">
    <location>
        <begin position="6"/>
        <end position="26"/>
    </location>
</feature>
<feature type="transmembrane region" description="Helical" evidence="1">
    <location>
        <begin position="30"/>
        <end position="50"/>
    </location>
</feature>
<feature type="transmembrane region" description="Helical" evidence="1">
    <location>
        <begin position="62"/>
        <end position="82"/>
    </location>
</feature>
<accession>Q608Y6</accession>
<dbReference type="EC" id="7.1.1.-" evidence="1"/>
<dbReference type="EMBL" id="AE017282">
    <property type="protein sequence ID" value="AAU92584.1"/>
    <property type="molecule type" value="Genomic_DNA"/>
</dbReference>
<dbReference type="RefSeq" id="WP_010960630.1">
    <property type="nucleotide sequence ID" value="NC_002977.6"/>
</dbReference>
<dbReference type="SMR" id="Q608Y6"/>
<dbReference type="STRING" id="243233.MCA1350"/>
<dbReference type="GeneID" id="88223628"/>
<dbReference type="KEGG" id="mca:MCA1350"/>
<dbReference type="eggNOG" id="COG0713">
    <property type="taxonomic scope" value="Bacteria"/>
</dbReference>
<dbReference type="HOGENOM" id="CLU_144724_0_1_6"/>
<dbReference type="Proteomes" id="UP000006821">
    <property type="component" value="Chromosome"/>
</dbReference>
<dbReference type="GO" id="GO:0030964">
    <property type="term" value="C:NADH dehydrogenase complex"/>
    <property type="evidence" value="ECO:0007669"/>
    <property type="project" value="TreeGrafter"/>
</dbReference>
<dbReference type="GO" id="GO:0005886">
    <property type="term" value="C:plasma membrane"/>
    <property type="evidence" value="ECO:0007669"/>
    <property type="project" value="UniProtKB-SubCell"/>
</dbReference>
<dbReference type="GO" id="GO:0050136">
    <property type="term" value="F:NADH:ubiquinone reductase (non-electrogenic) activity"/>
    <property type="evidence" value="ECO:0007669"/>
    <property type="project" value="UniProtKB-UniRule"/>
</dbReference>
<dbReference type="GO" id="GO:0048038">
    <property type="term" value="F:quinone binding"/>
    <property type="evidence" value="ECO:0007669"/>
    <property type="project" value="UniProtKB-KW"/>
</dbReference>
<dbReference type="GO" id="GO:0042773">
    <property type="term" value="P:ATP synthesis coupled electron transport"/>
    <property type="evidence" value="ECO:0007669"/>
    <property type="project" value="InterPro"/>
</dbReference>
<dbReference type="FunFam" id="1.10.287.3510:FF:000001">
    <property type="entry name" value="NADH-quinone oxidoreductase subunit K"/>
    <property type="match status" value="1"/>
</dbReference>
<dbReference type="Gene3D" id="1.10.287.3510">
    <property type="match status" value="1"/>
</dbReference>
<dbReference type="HAMAP" id="MF_01456">
    <property type="entry name" value="NDH1_NuoK"/>
    <property type="match status" value="1"/>
</dbReference>
<dbReference type="InterPro" id="IPR001133">
    <property type="entry name" value="NADH_UbQ_OxRdtase_chain4L/K"/>
</dbReference>
<dbReference type="InterPro" id="IPR039428">
    <property type="entry name" value="NUOK/Mnh_C1-like"/>
</dbReference>
<dbReference type="NCBIfam" id="NF004319">
    <property type="entry name" value="PRK05715.1-1"/>
    <property type="match status" value="1"/>
</dbReference>
<dbReference type="NCBIfam" id="NF004320">
    <property type="entry name" value="PRK05715.1-2"/>
    <property type="match status" value="1"/>
</dbReference>
<dbReference type="PANTHER" id="PTHR11434:SF16">
    <property type="entry name" value="NADH-UBIQUINONE OXIDOREDUCTASE CHAIN 4L"/>
    <property type="match status" value="1"/>
</dbReference>
<dbReference type="PANTHER" id="PTHR11434">
    <property type="entry name" value="NADH-UBIQUINONE OXIDOREDUCTASE SUBUNIT ND4L"/>
    <property type="match status" value="1"/>
</dbReference>
<dbReference type="Pfam" id="PF00420">
    <property type="entry name" value="Oxidored_q2"/>
    <property type="match status" value="1"/>
</dbReference>
<proteinExistence type="inferred from homology"/>
<keyword id="KW-0997">Cell inner membrane</keyword>
<keyword id="KW-1003">Cell membrane</keyword>
<keyword id="KW-0472">Membrane</keyword>
<keyword id="KW-0520">NAD</keyword>
<keyword id="KW-0874">Quinone</keyword>
<keyword id="KW-1185">Reference proteome</keyword>
<keyword id="KW-1278">Translocase</keyword>
<keyword id="KW-0812">Transmembrane</keyword>
<keyword id="KW-1133">Transmembrane helix</keyword>
<keyword id="KW-0813">Transport</keyword>
<keyword id="KW-0830">Ubiquinone</keyword>